<dbReference type="EC" id="2.5.1.61" evidence="1"/>
<dbReference type="EMBL" id="AP009351">
    <property type="protein sequence ID" value="BAF67836.1"/>
    <property type="molecule type" value="Genomic_DNA"/>
</dbReference>
<dbReference type="RefSeq" id="WP_001230228.1">
    <property type="nucleotide sequence ID" value="NZ_JBBIAE010000001.1"/>
</dbReference>
<dbReference type="SMR" id="A6QHK4"/>
<dbReference type="KEGG" id="sae:NWMN_1564"/>
<dbReference type="HOGENOM" id="CLU_019704_0_2_9"/>
<dbReference type="UniPathway" id="UPA00251">
    <property type="reaction ID" value="UER00319"/>
</dbReference>
<dbReference type="Proteomes" id="UP000006386">
    <property type="component" value="Chromosome"/>
</dbReference>
<dbReference type="GO" id="GO:0005737">
    <property type="term" value="C:cytoplasm"/>
    <property type="evidence" value="ECO:0007669"/>
    <property type="project" value="TreeGrafter"/>
</dbReference>
<dbReference type="GO" id="GO:0004418">
    <property type="term" value="F:hydroxymethylbilane synthase activity"/>
    <property type="evidence" value="ECO:0007669"/>
    <property type="project" value="UniProtKB-UniRule"/>
</dbReference>
<dbReference type="GO" id="GO:0006782">
    <property type="term" value="P:protoporphyrinogen IX biosynthetic process"/>
    <property type="evidence" value="ECO:0007669"/>
    <property type="project" value="UniProtKB-UniRule"/>
</dbReference>
<dbReference type="CDD" id="cd13646">
    <property type="entry name" value="PBP2_EcHMBS_like"/>
    <property type="match status" value="1"/>
</dbReference>
<dbReference type="FunFam" id="3.30.160.40:FF:000001">
    <property type="entry name" value="Porphobilinogen deaminase"/>
    <property type="match status" value="1"/>
</dbReference>
<dbReference type="FunFam" id="3.40.190.10:FF:000004">
    <property type="entry name" value="Porphobilinogen deaminase"/>
    <property type="match status" value="1"/>
</dbReference>
<dbReference type="FunFam" id="3.40.190.10:FF:000005">
    <property type="entry name" value="Porphobilinogen deaminase"/>
    <property type="match status" value="1"/>
</dbReference>
<dbReference type="Gene3D" id="3.40.190.10">
    <property type="entry name" value="Periplasmic binding protein-like II"/>
    <property type="match status" value="2"/>
</dbReference>
<dbReference type="Gene3D" id="3.30.160.40">
    <property type="entry name" value="Porphobilinogen deaminase, C-terminal domain"/>
    <property type="match status" value="1"/>
</dbReference>
<dbReference type="HAMAP" id="MF_00260">
    <property type="entry name" value="Porphobil_deam"/>
    <property type="match status" value="1"/>
</dbReference>
<dbReference type="InterPro" id="IPR000860">
    <property type="entry name" value="HemC"/>
</dbReference>
<dbReference type="InterPro" id="IPR022419">
    <property type="entry name" value="Porphobilin_deaminase_cofac_BS"/>
</dbReference>
<dbReference type="InterPro" id="IPR022417">
    <property type="entry name" value="Porphobilin_deaminase_N"/>
</dbReference>
<dbReference type="InterPro" id="IPR022418">
    <property type="entry name" value="Porphobilinogen_deaminase_C"/>
</dbReference>
<dbReference type="InterPro" id="IPR036803">
    <property type="entry name" value="Porphobilinogen_deaminase_C_sf"/>
</dbReference>
<dbReference type="NCBIfam" id="TIGR00212">
    <property type="entry name" value="hemC"/>
    <property type="match status" value="1"/>
</dbReference>
<dbReference type="PANTHER" id="PTHR11557">
    <property type="entry name" value="PORPHOBILINOGEN DEAMINASE"/>
    <property type="match status" value="1"/>
</dbReference>
<dbReference type="PANTHER" id="PTHR11557:SF0">
    <property type="entry name" value="PORPHOBILINOGEN DEAMINASE"/>
    <property type="match status" value="1"/>
</dbReference>
<dbReference type="Pfam" id="PF01379">
    <property type="entry name" value="Porphobil_deam"/>
    <property type="match status" value="1"/>
</dbReference>
<dbReference type="Pfam" id="PF03900">
    <property type="entry name" value="Porphobil_deamC"/>
    <property type="match status" value="1"/>
</dbReference>
<dbReference type="PIRSF" id="PIRSF001438">
    <property type="entry name" value="4pyrrol_synth_OHMeBilane_synth"/>
    <property type="match status" value="1"/>
</dbReference>
<dbReference type="PRINTS" id="PR00151">
    <property type="entry name" value="PORPHBDMNASE"/>
</dbReference>
<dbReference type="SUPFAM" id="SSF53850">
    <property type="entry name" value="Periplasmic binding protein-like II"/>
    <property type="match status" value="1"/>
</dbReference>
<dbReference type="SUPFAM" id="SSF54782">
    <property type="entry name" value="Porphobilinogen deaminase (hydroxymethylbilane synthase), C-terminal domain"/>
    <property type="match status" value="1"/>
</dbReference>
<dbReference type="PROSITE" id="PS00533">
    <property type="entry name" value="PORPHOBILINOGEN_DEAM"/>
    <property type="match status" value="1"/>
</dbReference>
<organism>
    <name type="scientific">Staphylococcus aureus (strain Newman)</name>
    <dbReference type="NCBI Taxonomy" id="426430"/>
    <lineage>
        <taxon>Bacteria</taxon>
        <taxon>Bacillati</taxon>
        <taxon>Bacillota</taxon>
        <taxon>Bacilli</taxon>
        <taxon>Bacillales</taxon>
        <taxon>Staphylococcaceae</taxon>
        <taxon>Staphylococcus</taxon>
    </lineage>
</organism>
<gene>
    <name evidence="1" type="primary">hemC</name>
    <name type="ordered locus">NWMN_1564</name>
</gene>
<feature type="chain" id="PRO_1000071888" description="Porphobilinogen deaminase">
    <location>
        <begin position="1"/>
        <end position="308"/>
    </location>
</feature>
<feature type="modified residue" description="S-(dipyrrolylmethanemethyl)cysteine" evidence="1">
    <location>
        <position position="241"/>
    </location>
</feature>
<evidence type="ECO:0000255" key="1">
    <source>
        <dbReference type="HAMAP-Rule" id="MF_00260"/>
    </source>
</evidence>
<comment type="function">
    <text evidence="1">Tetrapolymerization of the monopyrrole PBG into the hydroxymethylbilane pre-uroporphyrinogen in several discrete steps.</text>
</comment>
<comment type="catalytic activity">
    <reaction evidence="1">
        <text>4 porphobilinogen + H2O = hydroxymethylbilane + 4 NH4(+)</text>
        <dbReference type="Rhea" id="RHEA:13185"/>
        <dbReference type="ChEBI" id="CHEBI:15377"/>
        <dbReference type="ChEBI" id="CHEBI:28938"/>
        <dbReference type="ChEBI" id="CHEBI:57845"/>
        <dbReference type="ChEBI" id="CHEBI:58126"/>
        <dbReference type="EC" id="2.5.1.61"/>
    </reaction>
</comment>
<comment type="cofactor">
    <cofactor evidence="1">
        <name>dipyrromethane</name>
        <dbReference type="ChEBI" id="CHEBI:60342"/>
    </cofactor>
    <text evidence="1">Binds 1 dipyrromethane group covalently.</text>
</comment>
<comment type="pathway">
    <text evidence="1">Porphyrin-containing compound metabolism; protoporphyrin-IX biosynthesis; coproporphyrinogen-III from 5-aminolevulinate: step 2/4.</text>
</comment>
<comment type="subunit">
    <text evidence="1">Monomer.</text>
</comment>
<comment type="miscellaneous">
    <text evidence="1">The porphobilinogen subunits are added to the dipyrromethane group.</text>
</comment>
<comment type="similarity">
    <text evidence="1">Belongs to the HMBS family.</text>
</comment>
<name>HEM3_STAAE</name>
<keyword id="KW-0627">Porphyrin biosynthesis</keyword>
<keyword id="KW-0808">Transferase</keyword>
<accession>A6QHK4</accession>
<reference key="1">
    <citation type="journal article" date="2008" name="J. Bacteriol.">
        <title>Genome sequence of Staphylococcus aureus strain Newman and comparative analysis of staphylococcal genomes: polymorphism and evolution of two major pathogenicity islands.</title>
        <authorList>
            <person name="Baba T."/>
            <person name="Bae T."/>
            <person name="Schneewind O."/>
            <person name="Takeuchi F."/>
            <person name="Hiramatsu K."/>
        </authorList>
    </citation>
    <scope>NUCLEOTIDE SEQUENCE [LARGE SCALE GENOMIC DNA]</scope>
    <source>
        <strain>Newman</strain>
    </source>
</reference>
<protein>
    <recommendedName>
        <fullName evidence="1">Porphobilinogen deaminase</fullName>
        <shortName evidence="1">PBG</shortName>
        <ecNumber evidence="1">2.5.1.61</ecNumber>
    </recommendedName>
    <alternativeName>
        <fullName evidence="1">Hydroxymethylbilane synthase</fullName>
        <shortName evidence="1">HMBS</shortName>
    </alternativeName>
    <alternativeName>
        <fullName evidence="1">Pre-uroporphyrinogen synthase</fullName>
    </alternativeName>
</protein>
<sequence length="308" mass="34354">MRKLVVGSRRSKLALTQSQQFIDKLKAVEPNLEIEIKEIVTKGDRIVDKQLSKVGGKGLFVKEIQHELFEKNIDMAIHSLKDVPSVIPEGLTLGCIPDRELPFDAYISKTHTPLSQLPEGSIIGTSSLRRGAQILSKYPNLEIKWIRGNIDTRLEKLQTEDYDAIILAAAGLRRMGWSDDIVTSYLDRDTLLPAIGQGALGIECRSDDEELLTLLSKVHNDEVAKCVTAERTFLAEMDGSCQVPIAGYATISDQNEIEFTGLIMTPDGKERFEYTMNGTDPVELGKTVSNKLKEQGAYEIIKRLNEQH</sequence>
<proteinExistence type="inferred from homology"/>